<protein>
    <recommendedName>
        <fullName evidence="1">Sulfite reductase [NADPH] flavoprotein alpha-component</fullName>
        <shortName evidence="1">SiR-FP</shortName>
        <ecNumber evidence="1">1.8.1.2</ecNumber>
    </recommendedName>
</protein>
<keyword id="KW-0028">Amino-acid biosynthesis</keyword>
<keyword id="KW-0198">Cysteine biosynthesis</keyword>
<keyword id="KW-0249">Electron transport</keyword>
<keyword id="KW-0274">FAD</keyword>
<keyword id="KW-0285">Flavoprotein</keyword>
<keyword id="KW-0288">FMN</keyword>
<keyword id="KW-0521">NADP</keyword>
<keyword id="KW-0560">Oxidoreductase</keyword>
<keyword id="KW-0813">Transport</keyword>
<proteinExistence type="inferred from homology"/>
<gene>
    <name evidence="1" type="primary">cysJ</name>
    <name type="ordered locus">YE0755</name>
</gene>
<comment type="function">
    <text evidence="1">Component of the sulfite reductase complex that catalyzes the 6-electron reduction of sulfite to sulfide. This is one of several activities required for the biosynthesis of L-cysteine from sulfate. The flavoprotein component catalyzes the electron flow from NADPH -&gt; FAD -&gt; FMN to the hemoprotein component.</text>
</comment>
<comment type="catalytic activity">
    <reaction evidence="1">
        <text>hydrogen sulfide + 3 NADP(+) + 3 H2O = sulfite + 3 NADPH + 4 H(+)</text>
        <dbReference type="Rhea" id="RHEA:13801"/>
        <dbReference type="ChEBI" id="CHEBI:15377"/>
        <dbReference type="ChEBI" id="CHEBI:15378"/>
        <dbReference type="ChEBI" id="CHEBI:17359"/>
        <dbReference type="ChEBI" id="CHEBI:29919"/>
        <dbReference type="ChEBI" id="CHEBI:57783"/>
        <dbReference type="ChEBI" id="CHEBI:58349"/>
        <dbReference type="EC" id="1.8.1.2"/>
    </reaction>
</comment>
<comment type="cofactor">
    <cofactor evidence="1">
        <name>FAD</name>
        <dbReference type="ChEBI" id="CHEBI:57692"/>
    </cofactor>
    <text evidence="1">Binds 1 FAD per subunit.</text>
</comment>
<comment type="cofactor">
    <cofactor evidence="1">
        <name>FMN</name>
        <dbReference type="ChEBI" id="CHEBI:58210"/>
    </cofactor>
    <text evidence="1">Binds 1 FMN per subunit.</text>
</comment>
<comment type="pathway">
    <text evidence="1">Sulfur metabolism; hydrogen sulfide biosynthesis; hydrogen sulfide from sulfite (NADPH route): step 1/1.</text>
</comment>
<comment type="subunit">
    <text evidence="1">Alpha(8)-beta(8). The alpha component is a flavoprotein, the beta component is a hemoprotein.</text>
</comment>
<comment type="similarity">
    <text evidence="1">Belongs to the NADPH-dependent sulphite reductase flavoprotein subunit CysJ family.</text>
</comment>
<comment type="similarity">
    <text evidence="1">In the N-terminal section; belongs to the flavodoxin family.</text>
</comment>
<comment type="similarity">
    <text evidence="1">In the C-terminal section; belongs to the flavoprotein pyridine nucleotide cytochrome reductase family.</text>
</comment>
<reference key="1">
    <citation type="journal article" date="2006" name="PLoS Genet.">
        <title>The complete genome sequence and comparative genome analysis of the high pathogenicity Yersinia enterocolitica strain 8081.</title>
        <authorList>
            <person name="Thomson N.R."/>
            <person name="Howard S."/>
            <person name="Wren B.W."/>
            <person name="Holden M.T.G."/>
            <person name="Crossman L."/>
            <person name="Challis G.L."/>
            <person name="Churcher C."/>
            <person name="Mungall K."/>
            <person name="Brooks K."/>
            <person name="Chillingworth T."/>
            <person name="Feltwell T."/>
            <person name="Abdellah Z."/>
            <person name="Hauser H."/>
            <person name="Jagels K."/>
            <person name="Maddison M."/>
            <person name="Moule S."/>
            <person name="Sanders M."/>
            <person name="Whitehead S."/>
            <person name="Quail M.A."/>
            <person name="Dougan G."/>
            <person name="Parkhill J."/>
            <person name="Prentice M.B."/>
        </authorList>
    </citation>
    <scope>NUCLEOTIDE SEQUENCE [LARGE SCALE GENOMIC DNA]</scope>
    <source>
        <strain>NCTC 13174 / 8081</strain>
    </source>
</reference>
<accession>A1JJS2</accession>
<name>CYSJ_YERE8</name>
<sequence length="601" mass="66260">MTTQVPPSSLLPLSPEQLARLQAAVGEFSPTQMAWLSGYFWGMVNQQPGAVVAPAVAAPAAVTITLISASQTGNARRLAEQLRDDLVAAKLNVNLVNAGDYKFKQIAQERLLVIVASTQGEGEPAEEAVALYKFLFSKKAPKLPETAFAVLGLGDTSYEHFCQAGKDFDNKLAELGAQRLLERVDADVEYQESAQQWRQQIVAALQARVPAQSAAAVAVTPSGAVDEITSSPYSKAAPLTAQLSVQQKVTGRNSEKDVRHIEIDLGDSGLRYQPGDALGIWFDNDPALVEELLALLWLKGDEQVSIDGQNISLSQALRSHLELTQNTTLIVDKYAALSRDEKLIALLADKSALQHYAKNTPIVDMVRQAPSDLNADQLVALLRPLTPRLYSIASSQAETENEVHVTVGVVRYDIDGRPRTGGASGYLADRLEVDGDIRIFIEHNDNFRLPANPETPVIMIGPGTGIAPFRAFMQQREADGATGKNWLLFGNPHFTEDFLYQVEWQRYVKDGLLTRIDLAWSRDQADKIYVQDKLREQGAELWNWIQQGAHIYVCGDANRMAKDVEQVLLDVVALHGAMDAEQADEYLSELRLARRYQRDVY</sequence>
<organism>
    <name type="scientific">Yersinia enterocolitica serotype O:8 / biotype 1B (strain NCTC 13174 / 8081)</name>
    <dbReference type="NCBI Taxonomy" id="393305"/>
    <lineage>
        <taxon>Bacteria</taxon>
        <taxon>Pseudomonadati</taxon>
        <taxon>Pseudomonadota</taxon>
        <taxon>Gammaproteobacteria</taxon>
        <taxon>Enterobacterales</taxon>
        <taxon>Yersiniaceae</taxon>
        <taxon>Yersinia</taxon>
    </lineage>
</organism>
<feature type="chain" id="PRO_0000292978" description="Sulfite reductase [NADPH] flavoprotein alpha-component">
    <location>
        <begin position="1"/>
        <end position="601"/>
    </location>
</feature>
<feature type="domain" description="Flavodoxin-like" evidence="1">
    <location>
        <begin position="64"/>
        <end position="202"/>
    </location>
</feature>
<feature type="domain" description="FAD-binding FR-type" evidence="1">
    <location>
        <begin position="236"/>
        <end position="450"/>
    </location>
</feature>
<feature type="binding site" evidence="1">
    <location>
        <begin position="70"/>
        <end position="75"/>
    </location>
    <ligand>
        <name>FMN</name>
        <dbReference type="ChEBI" id="CHEBI:58210"/>
    </ligand>
</feature>
<feature type="binding site" evidence="1">
    <location>
        <begin position="117"/>
        <end position="120"/>
    </location>
    <ligand>
        <name>FMN</name>
        <dbReference type="ChEBI" id="CHEBI:58210"/>
    </ligand>
</feature>
<feature type="binding site" evidence="1">
    <location>
        <begin position="153"/>
        <end position="162"/>
    </location>
    <ligand>
        <name>FMN</name>
        <dbReference type="ChEBI" id="CHEBI:58210"/>
    </ligand>
</feature>
<feature type="binding site" evidence="1">
    <location>
        <position position="324"/>
    </location>
    <ligand>
        <name>FAD</name>
        <dbReference type="ChEBI" id="CHEBI:57692"/>
    </ligand>
</feature>
<feature type="binding site" evidence="1">
    <location>
        <position position="358"/>
    </location>
    <ligand>
        <name>FAD</name>
        <dbReference type="ChEBI" id="CHEBI:57692"/>
    </ligand>
</feature>
<feature type="binding site" evidence="1">
    <location>
        <begin position="388"/>
        <end position="391"/>
    </location>
    <ligand>
        <name>FAD</name>
        <dbReference type="ChEBI" id="CHEBI:57692"/>
    </ligand>
</feature>
<feature type="binding site" evidence="1">
    <location>
        <begin position="406"/>
        <end position="408"/>
    </location>
    <ligand>
        <name>FAD</name>
        <dbReference type="ChEBI" id="CHEBI:57692"/>
    </ligand>
</feature>
<feature type="binding site" evidence="1">
    <location>
        <position position="412"/>
    </location>
    <ligand>
        <name>FAD</name>
        <dbReference type="ChEBI" id="CHEBI:57692"/>
    </ligand>
</feature>
<feature type="binding site" evidence="1">
    <location>
        <begin position="421"/>
        <end position="424"/>
    </location>
    <ligand>
        <name>FAD</name>
        <dbReference type="ChEBI" id="CHEBI:57692"/>
    </ligand>
</feature>
<feature type="binding site" evidence="1">
    <location>
        <begin position="521"/>
        <end position="522"/>
    </location>
    <ligand>
        <name>NADP(+)</name>
        <dbReference type="ChEBI" id="CHEBI:58349"/>
    </ligand>
</feature>
<feature type="binding site" evidence="1">
    <location>
        <begin position="527"/>
        <end position="531"/>
    </location>
    <ligand>
        <name>NADP(+)</name>
        <dbReference type="ChEBI" id="CHEBI:58349"/>
    </ligand>
</feature>
<feature type="binding site" evidence="1">
    <location>
        <position position="563"/>
    </location>
    <ligand>
        <name>NADP(+)</name>
        <dbReference type="ChEBI" id="CHEBI:58349"/>
    </ligand>
</feature>
<feature type="binding site" evidence="1">
    <location>
        <position position="601"/>
    </location>
    <ligand>
        <name>FAD</name>
        <dbReference type="ChEBI" id="CHEBI:57692"/>
    </ligand>
</feature>
<dbReference type="EC" id="1.8.1.2" evidence="1"/>
<dbReference type="EMBL" id="AM286415">
    <property type="protein sequence ID" value="CAL10859.1"/>
    <property type="molecule type" value="Genomic_DNA"/>
</dbReference>
<dbReference type="RefSeq" id="WP_011815604.1">
    <property type="nucleotide sequence ID" value="NC_008800.1"/>
</dbReference>
<dbReference type="RefSeq" id="YP_001005099.1">
    <property type="nucleotide sequence ID" value="NC_008800.1"/>
</dbReference>
<dbReference type="SMR" id="A1JJS2"/>
<dbReference type="KEGG" id="yen:YE0755"/>
<dbReference type="PATRIC" id="fig|393305.7.peg.849"/>
<dbReference type="eggNOG" id="COG0369">
    <property type="taxonomic scope" value="Bacteria"/>
</dbReference>
<dbReference type="HOGENOM" id="CLU_001570_17_7_6"/>
<dbReference type="OrthoDB" id="9816402at2"/>
<dbReference type="UniPathway" id="UPA00140">
    <property type="reaction ID" value="UER00207"/>
</dbReference>
<dbReference type="Proteomes" id="UP000000642">
    <property type="component" value="Chromosome"/>
</dbReference>
<dbReference type="GO" id="GO:0005829">
    <property type="term" value="C:cytosol"/>
    <property type="evidence" value="ECO:0007669"/>
    <property type="project" value="TreeGrafter"/>
</dbReference>
<dbReference type="GO" id="GO:0050660">
    <property type="term" value="F:flavin adenine dinucleotide binding"/>
    <property type="evidence" value="ECO:0007669"/>
    <property type="project" value="InterPro"/>
</dbReference>
<dbReference type="GO" id="GO:0010181">
    <property type="term" value="F:FMN binding"/>
    <property type="evidence" value="ECO:0007669"/>
    <property type="project" value="InterPro"/>
</dbReference>
<dbReference type="GO" id="GO:0004783">
    <property type="term" value="F:sulfite reductase (NADPH) activity"/>
    <property type="evidence" value="ECO:0007669"/>
    <property type="project" value="UniProtKB-UniRule"/>
</dbReference>
<dbReference type="GO" id="GO:0019344">
    <property type="term" value="P:cysteine biosynthetic process"/>
    <property type="evidence" value="ECO:0007669"/>
    <property type="project" value="UniProtKB-KW"/>
</dbReference>
<dbReference type="GO" id="GO:0070814">
    <property type="term" value="P:hydrogen sulfide biosynthetic process"/>
    <property type="evidence" value="ECO:0007669"/>
    <property type="project" value="UniProtKB-UniRule"/>
</dbReference>
<dbReference type="GO" id="GO:0000103">
    <property type="term" value="P:sulfate assimilation"/>
    <property type="evidence" value="ECO:0007669"/>
    <property type="project" value="UniProtKB-UniRule"/>
</dbReference>
<dbReference type="CDD" id="cd06199">
    <property type="entry name" value="SiR"/>
    <property type="match status" value="1"/>
</dbReference>
<dbReference type="FunFam" id="3.40.50.80:FF:000001">
    <property type="entry name" value="NADPH--cytochrome P450 reductase 1"/>
    <property type="match status" value="1"/>
</dbReference>
<dbReference type="FunFam" id="1.20.990.10:FF:000004">
    <property type="entry name" value="Sulfite reductase [NADPH] flavoprotein alpha-component"/>
    <property type="match status" value="1"/>
</dbReference>
<dbReference type="FunFam" id="3.40.50.360:FF:000018">
    <property type="entry name" value="Sulfite reductase [NADPH] flavoprotein alpha-component"/>
    <property type="match status" value="1"/>
</dbReference>
<dbReference type="Gene3D" id="3.40.50.360">
    <property type="match status" value="1"/>
</dbReference>
<dbReference type="Gene3D" id="1.20.990.10">
    <property type="entry name" value="NADPH-cytochrome p450 Reductase, Chain A, domain 3"/>
    <property type="match status" value="1"/>
</dbReference>
<dbReference type="Gene3D" id="3.40.50.80">
    <property type="entry name" value="Nucleotide-binding domain of ferredoxin-NADP reductase (FNR) module"/>
    <property type="match status" value="1"/>
</dbReference>
<dbReference type="Gene3D" id="2.40.30.10">
    <property type="entry name" value="Translation factors"/>
    <property type="match status" value="1"/>
</dbReference>
<dbReference type="HAMAP" id="MF_01541">
    <property type="entry name" value="CysJ"/>
    <property type="match status" value="1"/>
</dbReference>
<dbReference type="InterPro" id="IPR010199">
    <property type="entry name" value="CysJ"/>
</dbReference>
<dbReference type="InterPro" id="IPR003097">
    <property type="entry name" value="CysJ-like_FAD-binding"/>
</dbReference>
<dbReference type="InterPro" id="IPR029758">
    <property type="entry name" value="CysJ_Proteobact"/>
</dbReference>
<dbReference type="InterPro" id="IPR017927">
    <property type="entry name" value="FAD-bd_FR_type"/>
</dbReference>
<dbReference type="InterPro" id="IPR001094">
    <property type="entry name" value="Flavdoxin-like"/>
</dbReference>
<dbReference type="InterPro" id="IPR008254">
    <property type="entry name" value="Flavodoxin/NO_synth"/>
</dbReference>
<dbReference type="InterPro" id="IPR001709">
    <property type="entry name" value="Flavoprot_Pyr_Nucl_cyt_Rdtase"/>
</dbReference>
<dbReference type="InterPro" id="IPR029039">
    <property type="entry name" value="Flavoprotein-like_sf"/>
</dbReference>
<dbReference type="InterPro" id="IPR039261">
    <property type="entry name" value="FNR_nucleotide-bd"/>
</dbReference>
<dbReference type="InterPro" id="IPR023173">
    <property type="entry name" value="NADPH_Cyt_P450_Rdtase_alpha"/>
</dbReference>
<dbReference type="InterPro" id="IPR001433">
    <property type="entry name" value="OxRdtase_FAD/NAD-bd"/>
</dbReference>
<dbReference type="InterPro" id="IPR017938">
    <property type="entry name" value="Riboflavin_synthase-like_b-brl"/>
</dbReference>
<dbReference type="NCBIfam" id="TIGR01931">
    <property type="entry name" value="cysJ"/>
    <property type="match status" value="1"/>
</dbReference>
<dbReference type="NCBIfam" id="NF008197">
    <property type="entry name" value="PRK10953.1"/>
    <property type="match status" value="1"/>
</dbReference>
<dbReference type="PANTHER" id="PTHR19384:SF128">
    <property type="entry name" value="NADPH OXIDOREDUCTASE A"/>
    <property type="match status" value="1"/>
</dbReference>
<dbReference type="PANTHER" id="PTHR19384">
    <property type="entry name" value="NITRIC OXIDE SYNTHASE-RELATED"/>
    <property type="match status" value="1"/>
</dbReference>
<dbReference type="Pfam" id="PF00667">
    <property type="entry name" value="FAD_binding_1"/>
    <property type="match status" value="1"/>
</dbReference>
<dbReference type="Pfam" id="PF00258">
    <property type="entry name" value="Flavodoxin_1"/>
    <property type="match status" value="1"/>
</dbReference>
<dbReference type="Pfam" id="PF00175">
    <property type="entry name" value="NAD_binding_1"/>
    <property type="match status" value="1"/>
</dbReference>
<dbReference type="PIRSF" id="PIRSF000207">
    <property type="entry name" value="SiR-FP_CysJ"/>
    <property type="match status" value="1"/>
</dbReference>
<dbReference type="PRINTS" id="PR00369">
    <property type="entry name" value="FLAVODOXIN"/>
</dbReference>
<dbReference type="PRINTS" id="PR00371">
    <property type="entry name" value="FPNCR"/>
</dbReference>
<dbReference type="SUPFAM" id="SSF52343">
    <property type="entry name" value="Ferredoxin reductase-like, C-terminal NADP-linked domain"/>
    <property type="match status" value="1"/>
</dbReference>
<dbReference type="SUPFAM" id="SSF52218">
    <property type="entry name" value="Flavoproteins"/>
    <property type="match status" value="1"/>
</dbReference>
<dbReference type="SUPFAM" id="SSF63380">
    <property type="entry name" value="Riboflavin synthase domain-like"/>
    <property type="match status" value="1"/>
</dbReference>
<dbReference type="PROSITE" id="PS51384">
    <property type="entry name" value="FAD_FR"/>
    <property type="match status" value="1"/>
</dbReference>
<dbReference type="PROSITE" id="PS50902">
    <property type="entry name" value="FLAVODOXIN_LIKE"/>
    <property type="match status" value="1"/>
</dbReference>
<evidence type="ECO:0000255" key="1">
    <source>
        <dbReference type="HAMAP-Rule" id="MF_01541"/>
    </source>
</evidence>